<organism>
    <name type="scientific">Bordetella parapertussis (strain 12822 / ATCC BAA-587 / NCTC 13253)</name>
    <dbReference type="NCBI Taxonomy" id="257311"/>
    <lineage>
        <taxon>Bacteria</taxon>
        <taxon>Pseudomonadati</taxon>
        <taxon>Pseudomonadota</taxon>
        <taxon>Betaproteobacteria</taxon>
        <taxon>Burkholderiales</taxon>
        <taxon>Alcaligenaceae</taxon>
        <taxon>Bordetella</taxon>
    </lineage>
</organism>
<comment type="function">
    <text evidence="1">Hydrolyzes diadenosine 5',5'''-P1,P4-tetraphosphate to yield ADP.</text>
</comment>
<comment type="catalytic activity">
    <reaction evidence="1">
        <text>P(1),P(4)-bis(5'-adenosyl) tetraphosphate + H2O = 2 ADP + 2 H(+)</text>
        <dbReference type="Rhea" id="RHEA:24252"/>
        <dbReference type="ChEBI" id="CHEBI:15377"/>
        <dbReference type="ChEBI" id="CHEBI:15378"/>
        <dbReference type="ChEBI" id="CHEBI:58141"/>
        <dbReference type="ChEBI" id="CHEBI:456216"/>
        <dbReference type="EC" id="3.6.1.41"/>
    </reaction>
</comment>
<comment type="similarity">
    <text evidence="1">Belongs to the Ap4A hydrolase family.</text>
</comment>
<sequence length="277" mass="30511">MKGSIWTIGDVQGCCAPLAELLAHPEIAGDTDSRFWFAGDLVNRGPQSLAVLRRIMAMGERCTAVLGNHDLHLLAAYAGVRKPSKSDTLDEVLQAPDAVDLIDWLRFRPLAHYEAGHLMVHAGVLAKWDVAKTLALAGEVEQALRGPNWRKALQKMYGNEPATWKDDHTGGKRMRVIINALTRIRLCTPSGHMEFATKVAPGAWPAGLVPWFDVPNRATRDVTVVFGHWSTLGLLMRPDVICLDTGCVWGGALSALRLHDRKLVQVKCKRFQDPNGD</sequence>
<gene>
    <name evidence="1" type="primary">apaH</name>
    <name type="ordered locus">BPP3927</name>
</gene>
<name>APAH_BORPA</name>
<accession>Q7W3V0</accession>
<proteinExistence type="inferred from homology"/>
<protein>
    <recommendedName>
        <fullName evidence="1">Bis(5'-nucleosyl)-tetraphosphatase, symmetrical</fullName>
        <ecNumber evidence="1">3.6.1.41</ecNumber>
    </recommendedName>
    <alternativeName>
        <fullName evidence="1">Ap4A hydrolase</fullName>
    </alternativeName>
    <alternativeName>
        <fullName evidence="1">Diadenosine 5',5'''-P1,P4-tetraphosphate pyrophosphohydrolase</fullName>
    </alternativeName>
    <alternativeName>
        <fullName evidence="1">Diadenosine tetraphosphatase</fullName>
    </alternativeName>
</protein>
<keyword id="KW-0378">Hydrolase</keyword>
<evidence type="ECO:0000255" key="1">
    <source>
        <dbReference type="HAMAP-Rule" id="MF_00199"/>
    </source>
</evidence>
<reference key="1">
    <citation type="journal article" date="2003" name="Nat. Genet.">
        <title>Comparative analysis of the genome sequences of Bordetella pertussis, Bordetella parapertussis and Bordetella bronchiseptica.</title>
        <authorList>
            <person name="Parkhill J."/>
            <person name="Sebaihia M."/>
            <person name="Preston A."/>
            <person name="Murphy L.D."/>
            <person name="Thomson N.R."/>
            <person name="Harris D.E."/>
            <person name="Holden M.T.G."/>
            <person name="Churcher C.M."/>
            <person name="Bentley S.D."/>
            <person name="Mungall K.L."/>
            <person name="Cerdeno-Tarraga A.-M."/>
            <person name="Temple L."/>
            <person name="James K.D."/>
            <person name="Harris B."/>
            <person name="Quail M.A."/>
            <person name="Achtman M."/>
            <person name="Atkin R."/>
            <person name="Baker S."/>
            <person name="Basham D."/>
            <person name="Bason N."/>
            <person name="Cherevach I."/>
            <person name="Chillingworth T."/>
            <person name="Collins M."/>
            <person name="Cronin A."/>
            <person name="Davis P."/>
            <person name="Doggett J."/>
            <person name="Feltwell T."/>
            <person name="Goble A."/>
            <person name="Hamlin N."/>
            <person name="Hauser H."/>
            <person name="Holroyd S."/>
            <person name="Jagels K."/>
            <person name="Leather S."/>
            <person name="Moule S."/>
            <person name="Norberczak H."/>
            <person name="O'Neil S."/>
            <person name="Ormond D."/>
            <person name="Price C."/>
            <person name="Rabbinowitsch E."/>
            <person name="Rutter S."/>
            <person name="Sanders M."/>
            <person name="Saunders D."/>
            <person name="Seeger K."/>
            <person name="Sharp S."/>
            <person name="Simmonds M."/>
            <person name="Skelton J."/>
            <person name="Squares R."/>
            <person name="Squares S."/>
            <person name="Stevens K."/>
            <person name="Unwin L."/>
            <person name="Whitehead S."/>
            <person name="Barrell B.G."/>
            <person name="Maskell D.J."/>
        </authorList>
    </citation>
    <scope>NUCLEOTIDE SEQUENCE [LARGE SCALE GENOMIC DNA]</scope>
    <source>
        <strain>12822 / ATCC BAA-587 / NCTC 13253</strain>
    </source>
</reference>
<feature type="chain" id="PRO_0000197979" description="Bis(5'-nucleosyl)-tetraphosphatase, symmetrical">
    <location>
        <begin position="1"/>
        <end position="277"/>
    </location>
</feature>
<dbReference type="EC" id="3.6.1.41" evidence="1"/>
<dbReference type="EMBL" id="BX640435">
    <property type="protein sequence ID" value="CAE39210.1"/>
    <property type="molecule type" value="Genomic_DNA"/>
</dbReference>
<dbReference type="RefSeq" id="WP_003814962.1">
    <property type="nucleotide sequence ID" value="NC_002928.3"/>
</dbReference>
<dbReference type="SMR" id="Q7W3V0"/>
<dbReference type="KEGG" id="bpa:BPP3927"/>
<dbReference type="HOGENOM" id="CLU_056184_1_0_4"/>
<dbReference type="Proteomes" id="UP000001421">
    <property type="component" value="Chromosome"/>
</dbReference>
<dbReference type="GO" id="GO:0008803">
    <property type="term" value="F:bis(5'-nucleosyl)-tetraphosphatase (symmetrical) activity"/>
    <property type="evidence" value="ECO:0007669"/>
    <property type="project" value="UniProtKB-UniRule"/>
</dbReference>
<dbReference type="CDD" id="cd07422">
    <property type="entry name" value="MPP_ApaH"/>
    <property type="match status" value="1"/>
</dbReference>
<dbReference type="Gene3D" id="3.60.21.10">
    <property type="match status" value="1"/>
</dbReference>
<dbReference type="HAMAP" id="MF_00199">
    <property type="entry name" value="ApaH"/>
    <property type="match status" value="1"/>
</dbReference>
<dbReference type="InterPro" id="IPR004617">
    <property type="entry name" value="ApaH"/>
</dbReference>
<dbReference type="InterPro" id="IPR004843">
    <property type="entry name" value="Calcineurin-like_PHP_ApaH"/>
</dbReference>
<dbReference type="InterPro" id="IPR029052">
    <property type="entry name" value="Metallo-depent_PP-like"/>
</dbReference>
<dbReference type="NCBIfam" id="TIGR00668">
    <property type="entry name" value="apaH"/>
    <property type="match status" value="1"/>
</dbReference>
<dbReference type="NCBIfam" id="NF001204">
    <property type="entry name" value="PRK00166.1"/>
    <property type="match status" value="1"/>
</dbReference>
<dbReference type="PANTHER" id="PTHR40942">
    <property type="match status" value="1"/>
</dbReference>
<dbReference type="PANTHER" id="PTHR40942:SF4">
    <property type="entry name" value="CYTOCHROME C5"/>
    <property type="match status" value="1"/>
</dbReference>
<dbReference type="Pfam" id="PF00149">
    <property type="entry name" value="Metallophos"/>
    <property type="match status" value="1"/>
</dbReference>
<dbReference type="PIRSF" id="PIRSF000903">
    <property type="entry name" value="B5n-ttraPtase_sm"/>
    <property type="match status" value="1"/>
</dbReference>
<dbReference type="SUPFAM" id="SSF56300">
    <property type="entry name" value="Metallo-dependent phosphatases"/>
    <property type="match status" value="1"/>
</dbReference>